<comment type="function">
    <text evidence="1">Specifically methylates the N4 position of cytidine in position 1402 (C1402) of 16S rRNA.</text>
</comment>
<comment type="catalytic activity">
    <reaction evidence="1">
        <text>cytidine(1402) in 16S rRNA + S-adenosyl-L-methionine = N(4)-methylcytidine(1402) in 16S rRNA + S-adenosyl-L-homocysteine + H(+)</text>
        <dbReference type="Rhea" id="RHEA:42928"/>
        <dbReference type="Rhea" id="RHEA-COMP:10286"/>
        <dbReference type="Rhea" id="RHEA-COMP:10287"/>
        <dbReference type="ChEBI" id="CHEBI:15378"/>
        <dbReference type="ChEBI" id="CHEBI:57856"/>
        <dbReference type="ChEBI" id="CHEBI:59789"/>
        <dbReference type="ChEBI" id="CHEBI:74506"/>
        <dbReference type="ChEBI" id="CHEBI:82748"/>
        <dbReference type="EC" id="2.1.1.199"/>
    </reaction>
</comment>
<comment type="subcellular location">
    <subcellularLocation>
        <location evidence="1">Cytoplasm</location>
    </subcellularLocation>
</comment>
<comment type="similarity">
    <text evidence="1">Belongs to the methyltransferase superfamily. RsmH family.</text>
</comment>
<reference key="1">
    <citation type="journal article" date="2009" name="J. Bacteriol.">
        <title>The genome of Thermosipho africanus TCF52B: lateral genetic connections to the Firmicutes and Archaea.</title>
        <authorList>
            <person name="Nesboe C.L."/>
            <person name="Bapteste E."/>
            <person name="Curtis B."/>
            <person name="Dahle H."/>
            <person name="Lopez P."/>
            <person name="Macleod D."/>
            <person name="Dlutek M."/>
            <person name="Bowman S."/>
            <person name="Zhaxybayeva O."/>
            <person name="Birkeland N.-K."/>
            <person name="Doolittle W.F."/>
        </authorList>
    </citation>
    <scope>NUCLEOTIDE SEQUENCE [LARGE SCALE GENOMIC DNA]</scope>
    <source>
        <strain>TCF52B</strain>
    </source>
</reference>
<dbReference type="EC" id="2.1.1.199" evidence="1"/>
<dbReference type="EMBL" id="CP001185">
    <property type="protein sequence ID" value="ACJ74532.1"/>
    <property type="molecule type" value="Genomic_DNA"/>
</dbReference>
<dbReference type="RefSeq" id="WP_012579299.1">
    <property type="nucleotide sequence ID" value="NC_011653.1"/>
</dbReference>
<dbReference type="SMR" id="B7IEL8"/>
<dbReference type="STRING" id="484019.THA_24"/>
<dbReference type="KEGG" id="taf:THA_24"/>
<dbReference type="eggNOG" id="COG0275">
    <property type="taxonomic scope" value="Bacteria"/>
</dbReference>
<dbReference type="HOGENOM" id="CLU_038422_3_0_0"/>
<dbReference type="OrthoDB" id="9806637at2"/>
<dbReference type="Proteomes" id="UP000002453">
    <property type="component" value="Chromosome"/>
</dbReference>
<dbReference type="GO" id="GO:0005737">
    <property type="term" value="C:cytoplasm"/>
    <property type="evidence" value="ECO:0007669"/>
    <property type="project" value="UniProtKB-SubCell"/>
</dbReference>
<dbReference type="GO" id="GO:0071424">
    <property type="term" value="F:rRNA (cytosine-N4-)-methyltransferase activity"/>
    <property type="evidence" value="ECO:0007669"/>
    <property type="project" value="UniProtKB-UniRule"/>
</dbReference>
<dbReference type="GO" id="GO:0070475">
    <property type="term" value="P:rRNA base methylation"/>
    <property type="evidence" value="ECO:0007669"/>
    <property type="project" value="UniProtKB-UniRule"/>
</dbReference>
<dbReference type="Gene3D" id="1.10.150.170">
    <property type="entry name" value="Putative methyltransferase TM0872, insert domain"/>
    <property type="match status" value="1"/>
</dbReference>
<dbReference type="Gene3D" id="3.40.50.150">
    <property type="entry name" value="Vaccinia Virus protein VP39"/>
    <property type="match status" value="1"/>
</dbReference>
<dbReference type="HAMAP" id="MF_01007">
    <property type="entry name" value="16SrRNA_methyltr_H"/>
    <property type="match status" value="1"/>
</dbReference>
<dbReference type="InterPro" id="IPR002903">
    <property type="entry name" value="RsmH"/>
</dbReference>
<dbReference type="InterPro" id="IPR023397">
    <property type="entry name" value="SAM-dep_MeTrfase_MraW_recog"/>
</dbReference>
<dbReference type="InterPro" id="IPR029063">
    <property type="entry name" value="SAM-dependent_MTases_sf"/>
</dbReference>
<dbReference type="NCBIfam" id="TIGR00006">
    <property type="entry name" value="16S rRNA (cytosine(1402)-N(4))-methyltransferase RsmH"/>
    <property type="match status" value="1"/>
</dbReference>
<dbReference type="PANTHER" id="PTHR11265:SF0">
    <property type="entry name" value="12S RRNA N4-METHYLCYTIDINE METHYLTRANSFERASE"/>
    <property type="match status" value="1"/>
</dbReference>
<dbReference type="PANTHER" id="PTHR11265">
    <property type="entry name" value="S-ADENOSYL-METHYLTRANSFERASE MRAW"/>
    <property type="match status" value="1"/>
</dbReference>
<dbReference type="Pfam" id="PF01795">
    <property type="entry name" value="Methyltransf_5"/>
    <property type="match status" value="1"/>
</dbReference>
<dbReference type="PIRSF" id="PIRSF004486">
    <property type="entry name" value="MraW"/>
    <property type="match status" value="1"/>
</dbReference>
<dbReference type="SUPFAM" id="SSF81799">
    <property type="entry name" value="Putative methyltransferase TM0872, insert domain"/>
    <property type="match status" value="1"/>
</dbReference>
<dbReference type="SUPFAM" id="SSF53335">
    <property type="entry name" value="S-adenosyl-L-methionine-dependent methyltransferases"/>
    <property type="match status" value="1"/>
</dbReference>
<name>RSMH_THEAB</name>
<feature type="chain" id="PRO_0000387191" description="Ribosomal RNA small subunit methyltransferase H">
    <location>
        <begin position="1"/>
        <end position="291"/>
    </location>
</feature>
<feature type="binding site" evidence="1">
    <location>
        <begin position="36"/>
        <end position="38"/>
    </location>
    <ligand>
        <name>S-adenosyl-L-methionine</name>
        <dbReference type="ChEBI" id="CHEBI:59789"/>
    </ligand>
</feature>
<feature type="binding site" evidence="1">
    <location>
        <position position="55"/>
    </location>
    <ligand>
        <name>S-adenosyl-L-methionine</name>
        <dbReference type="ChEBI" id="CHEBI:59789"/>
    </ligand>
</feature>
<feature type="binding site" evidence="1">
    <location>
        <position position="90"/>
    </location>
    <ligand>
        <name>S-adenosyl-L-methionine</name>
        <dbReference type="ChEBI" id="CHEBI:59789"/>
    </ligand>
</feature>
<feature type="binding site" evidence="1">
    <location>
        <position position="102"/>
    </location>
    <ligand>
        <name>S-adenosyl-L-methionine</name>
        <dbReference type="ChEBI" id="CHEBI:59789"/>
    </ligand>
</feature>
<feature type="binding site" evidence="1">
    <location>
        <position position="109"/>
    </location>
    <ligand>
        <name>S-adenosyl-L-methionine</name>
        <dbReference type="ChEBI" id="CHEBI:59789"/>
    </ligand>
</feature>
<proteinExistence type="inferred from homology"/>
<gene>
    <name evidence="1" type="primary">rsmH</name>
    <name type="synonym">mraW</name>
    <name type="ordered locus">THA_24</name>
</gene>
<sequence length="291" mass="33326">MRRYEDKHIPVMPKEVIEHLIWKKDGIYVDCTVGEGGHTLLLASISPDIFVIGLDIDSEVLNIAEKNLSSFTNVKLFKSSYVDLPVVLKALNIEKVSGILIDLGISTYQLKAEGRGFTFNRDEPLDMRMNLEQKKTAYDVVNFYSEKELADIIFKYGEERFSRRIARSIVNSRPINSTLELVEAIRKALPPQEIRKRKRHFATKTFQAIRIEVNGELSNIENFLNNVPDLLEIGGRLAVISFHSLEDRLVKHFIKNSNKLRQIVGPIIPSKEEIDENPRARSAKLRIAERI</sequence>
<protein>
    <recommendedName>
        <fullName evidence="1">Ribosomal RNA small subunit methyltransferase H</fullName>
        <ecNumber evidence="1">2.1.1.199</ecNumber>
    </recommendedName>
    <alternativeName>
        <fullName evidence="1">16S rRNA m(4)C1402 methyltransferase</fullName>
    </alternativeName>
    <alternativeName>
        <fullName evidence="1">rRNA (cytosine-N(4)-)-methyltransferase RsmH</fullName>
    </alternativeName>
</protein>
<keyword id="KW-0963">Cytoplasm</keyword>
<keyword id="KW-0489">Methyltransferase</keyword>
<keyword id="KW-1185">Reference proteome</keyword>
<keyword id="KW-0698">rRNA processing</keyword>
<keyword id="KW-0949">S-adenosyl-L-methionine</keyword>
<keyword id="KW-0808">Transferase</keyword>
<accession>B7IEL8</accession>
<organism>
    <name type="scientific">Thermosipho africanus (strain TCF52B)</name>
    <dbReference type="NCBI Taxonomy" id="484019"/>
    <lineage>
        <taxon>Bacteria</taxon>
        <taxon>Thermotogati</taxon>
        <taxon>Thermotogota</taxon>
        <taxon>Thermotogae</taxon>
        <taxon>Thermotogales</taxon>
        <taxon>Fervidobacteriaceae</taxon>
        <taxon>Thermosipho</taxon>
    </lineage>
</organism>
<evidence type="ECO:0000255" key="1">
    <source>
        <dbReference type="HAMAP-Rule" id="MF_01007"/>
    </source>
</evidence>